<protein>
    <recommendedName>
        <fullName evidence="1">Flap endonuclease 1</fullName>
        <shortName evidence="1">FEN-1</shortName>
        <ecNumber evidence="1">3.1.-.-</ecNumber>
    </recommendedName>
    <alternativeName>
        <fullName evidence="1">Flap structure-specific endonuclease 1</fullName>
    </alternativeName>
</protein>
<dbReference type="EC" id="3.1.-.-" evidence="1"/>
<dbReference type="EMBL" id="CH408051">
    <property type="protein sequence ID" value="EDV12986.1"/>
    <property type="molecule type" value="Genomic_DNA"/>
</dbReference>
<dbReference type="SMR" id="B3LQY3"/>
<dbReference type="HOGENOM" id="CLU_032444_2_0_1"/>
<dbReference type="OrthoDB" id="22257at4893"/>
<dbReference type="Proteomes" id="UP000008335">
    <property type="component" value="Unassembled WGS sequence"/>
</dbReference>
<dbReference type="GO" id="GO:0005739">
    <property type="term" value="C:mitochondrion"/>
    <property type="evidence" value="ECO:0007669"/>
    <property type="project" value="UniProtKB-SubCell"/>
</dbReference>
<dbReference type="GO" id="GO:0005730">
    <property type="term" value="C:nucleolus"/>
    <property type="evidence" value="ECO:0007669"/>
    <property type="project" value="UniProtKB-SubCell"/>
</dbReference>
<dbReference type="GO" id="GO:0005654">
    <property type="term" value="C:nucleoplasm"/>
    <property type="evidence" value="ECO:0007669"/>
    <property type="project" value="UniProtKB-SubCell"/>
</dbReference>
<dbReference type="GO" id="GO:0008409">
    <property type="term" value="F:5'-3' exonuclease activity"/>
    <property type="evidence" value="ECO:0007669"/>
    <property type="project" value="UniProtKB-UniRule"/>
</dbReference>
<dbReference type="GO" id="GO:0017108">
    <property type="term" value="F:5'-flap endonuclease activity"/>
    <property type="evidence" value="ECO:0007669"/>
    <property type="project" value="UniProtKB-UniRule"/>
</dbReference>
<dbReference type="GO" id="GO:0003677">
    <property type="term" value="F:DNA binding"/>
    <property type="evidence" value="ECO:0007669"/>
    <property type="project" value="UniProtKB-UniRule"/>
</dbReference>
<dbReference type="GO" id="GO:0000287">
    <property type="term" value="F:magnesium ion binding"/>
    <property type="evidence" value="ECO:0007669"/>
    <property type="project" value="UniProtKB-UniRule"/>
</dbReference>
<dbReference type="GO" id="GO:0006284">
    <property type="term" value="P:base-excision repair"/>
    <property type="evidence" value="ECO:0007669"/>
    <property type="project" value="UniProtKB-UniRule"/>
</dbReference>
<dbReference type="GO" id="GO:0043137">
    <property type="term" value="P:DNA replication, removal of RNA primer"/>
    <property type="evidence" value="ECO:0007669"/>
    <property type="project" value="UniProtKB-UniRule"/>
</dbReference>
<dbReference type="CDD" id="cd09907">
    <property type="entry name" value="H3TH_FEN1-Euk"/>
    <property type="match status" value="1"/>
</dbReference>
<dbReference type="CDD" id="cd09867">
    <property type="entry name" value="PIN_FEN1"/>
    <property type="match status" value="1"/>
</dbReference>
<dbReference type="FunFam" id="1.10.150.20:FF:000009">
    <property type="entry name" value="Flap endonuclease 1"/>
    <property type="match status" value="1"/>
</dbReference>
<dbReference type="FunFam" id="3.40.50.1010:FF:000003">
    <property type="entry name" value="Flap endonuclease 1"/>
    <property type="match status" value="1"/>
</dbReference>
<dbReference type="Gene3D" id="1.10.150.20">
    <property type="entry name" value="5' to 3' exonuclease, C-terminal subdomain"/>
    <property type="match status" value="1"/>
</dbReference>
<dbReference type="Gene3D" id="3.40.50.1010">
    <property type="entry name" value="5'-nuclease"/>
    <property type="match status" value="1"/>
</dbReference>
<dbReference type="HAMAP" id="MF_00614">
    <property type="entry name" value="Fen"/>
    <property type="match status" value="1"/>
</dbReference>
<dbReference type="InterPro" id="IPR036279">
    <property type="entry name" value="5-3_exonuclease_C_sf"/>
</dbReference>
<dbReference type="InterPro" id="IPR023426">
    <property type="entry name" value="Flap_endonuc"/>
</dbReference>
<dbReference type="InterPro" id="IPR008918">
    <property type="entry name" value="HhH2"/>
</dbReference>
<dbReference type="InterPro" id="IPR029060">
    <property type="entry name" value="PIN-like_dom_sf"/>
</dbReference>
<dbReference type="InterPro" id="IPR006086">
    <property type="entry name" value="XPG-I_dom"/>
</dbReference>
<dbReference type="InterPro" id="IPR006084">
    <property type="entry name" value="XPG/Rad2"/>
</dbReference>
<dbReference type="InterPro" id="IPR019974">
    <property type="entry name" value="XPG_CS"/>
</dbReference>
<dbReference type="InterPro" id="IPR006085">
    <property type="entry name" value="XPG_DNA_repair_N"/>
</dbReference>
<dbReference type="PANTHER" id="PTHR11081:SF9">
    <property type="entry name" value="FLAP ENDONUCLEASE 1"/>
    <property type="match status" value="1"/>
</dbReference>
<dbReference type="PANTHER" id="PTHR11081">
    <property type="entry name" value="FLAP ENDONUCLEASE FAMILY MEMBER"/>
    <property type="match status" value="1"/>
</dbReference>
<dbReference type="Pfam" id="PF00867">
    <property type="entry name" value="XPG_I"/>
    <property type="match status" value="1"/>
</dbReference>
<dbReference type="Pfam" id="PF00752">
    <property type="entry name" value="XPG_N"/>
    <property type="match status" value="1"/>
</dbReference>
<dbReference type="PRINTS" id="PR00853">
    <property type="entry name" value="XPGRADSUPER"/>
</dbReference>
<dbReference type="SMART" id="SM00279">
    <property type="entry name" value="HhH2"/>
    <property type="match status" value="1"/>
</dbReference>
<dbReference type="SMART" id="SM00484">
    <property type="entry name" value="XPGI"/>
    <property type="match status" value="1"/>
</dbReference>
<dbReference type="SMART" id="SM00485">
    <property type="entry name" value="XPGN"/>
    <property type="match status" value="1"/>
</dbReference>
<dbReference type="SUPFAM" id="SSF47807">
    <property type="entry name" value="5' to 3' exonuclease, C-terminal subdomain"/>
    <property type="match status" value="1"/>
</dbReference>
<dbReference type="SUPFAM" id="SSF88723">
    <property type="entry name" value="PIN domain-like"/>
    <property type="match status" value="1"/>
</dbReference>
<dbReference type="PROSITE" id="PS00841">
    <property type="entry name" value="XPG_1"/>
    <property type="match status" value="1"/>
</dbReference>
<dbReference type="PROSITE" id="PS00842">
    <property type="entry name" value="XPG_2"/>
    <property type="match status" value="1"/>
</dbReference>
<sequence>MGIKGLNAIISEHVPSAIRKSDIKSFFGRKVAIDASMSLYQFLIAVRQQDGGQLTNEAGETTSHLMGMFYRTLRMIDNGIKPCYVFDGKPPDLKSHELTKRSSRRVETEKKLAEATTELEKMKQERRLVKVSKEHNEEAQKLLGLMGIPYIIAPTEAEAQCAELAKKGKVYAAASEDMDTLCYRTPFLLRHLTFSETKKEPIHEIDTELVLRGLDLTIEQFVDLCIMLGCDYCESIRGVGPVTALKLIKTHGSIEKIVEFIESGESNNTKWKIPEDWPYKQARMLFLDPEVIDGNEINLKWSPPKEKELIEYLCDDKKFSEERVKSGISRLKKGLKSGIQGRLDGFFQVVPKTKEQLAAAAKRAQENKKLNKNKNKVTKGRR</sequence>
<keyword id="KW-0227">DNA damage</keyword>
<keyword id="KW-0234">DNA repair</keyword>
<keyword id="KW-0235">DNA replication</keyword>
<keyword id="KW-0255">Endonuclease</keyword>
<keyword id="KW-0269">Exonuclease</keyword>
<keyword id="KW-0378">Hydrolase</keyword>
<keyword id="KW-0460">Magnesium</keyword>
<keyword id="KW-0479">Metal-binding</keyword>
<keyword id="KW-0496">Mitochondrion</keyword>
<keyword id="KW-0540">Nuclease</keyword>
<keyword id="KW-0539">Nucleus</keyword>
<keyword id="KW-0597">Phosphoprotein</keyword>
<proteinExistence type="inferred from homology"/>
<gene>
    <name evidence="1" type="primary">RAD27</name>
    <name evidence="1" type="synonym">FEN1</name>
    <name type="ORF">SCRG_03908</name>
</gene>
<comment type="function">
    <text evidence="1">Structure-specific nuclease with 5'-flap endonuclease and 5'-3' exonuclease activities involved in DNA replication and repair. During DNA replication, cleaves the 5'-overhanging flap structure that is generated by displacement synthesis when DNA polymerase encounters the 5'-end of a downstream Okazaki fragment. It enters the flap from the 5'-end and then tracks to cleave the flap base, leaving a nick for ligation. Also involved in the long patch base excision repair (LP-BER) pathway, by cleaving within the apurinic/apyrimidinic (AP) site-terminated flap. Acts as a genome stabilization factor that prevents flaps from equilibrating into structures that lead to duplications and deletions. Also possesses 5'-3' exonuclease activity on nicked or gapped double-stranded DNA, and exhibits RNase H activity. Also involved in replication and repair of rDNA and in repairing mitochondrial DNA.</text>
</comment>
<comment type="cofactor">
    <cofactor evidence="1">
        <name>Mg(2+)</name>
        <dbReference type="ChEBI" id="CHEBI:18420"/>
    </cofactor>
    <text evidence="1">Binds 2 magnesium ions per subunit. They probably participate in the reaction catalyzed by the enzyme. May bind an additional third magnesium ion after substrate binding.</text>
</comment>
<comment type="subunit">
    <text evidence="1">Interacts with PCNA. Three molecules of RAD27 bind to one PCNA trimer with each molecule binding to one PCNA monomer. PCNA stimulates the nuclease activity without altering cleavage specificity.</text>
</comment>
<comment type="subcellular location">
    <subcellularLocation>
        <location evidence="1">Nucleus</location>
        <location evidence="1">Nucleolus</location>
    </subcellularLocation>
    <subcellularLocation>
        <location evidence="1">Nucleus</location>
        <location evidence="1">Nucleoplasm</location>
    </subcellularLocation>
    <subcellularLocation>
        <location evidence="1">Mitochondrion</location>
    </subcellularLocation>
    <text evidence="1">Resides mostly in the nucleoli and relocalizes to the nucleoplasm upon DNA damage.</text>
</comment>
<comment type="PTM">
    <text evidence="1">Phosphorylated. Phosphorylation upon DNA damage induces relocalization to the nuclear plasma.</text>
</comment>
<comment type="similarity">
    <text evidence="1">Belongs to the XPG/RAD2 endonuclease family. FEN1 subfamily.</text>
</comment>
<accession>B3LQY3</accession>
<evidence type="ECO:0000255" key="1">
    <source>
        <dbReference type="HAMAP-Rule" id="MF_03140"/>
    </source>
</evidence>
<evidence type="ECO:0000256" key="2">
    <source>
        <dbReference type="SAM" id="MobiDB-lite"/>
    </source>
</evidence>
<feature type="chain" id="PRO_0000403598" description="Flap endonuclease 1">
    <location>
        <begin position="1"/>
        <end position="382"/>
    </location>
</feature>
<feature type="region of interest" description="N-domain">
    <location>
        <begin position="1"/>
        <end position="105"/>
    </location>
</feature>
<feature type="region of interest" description="I-domain">
    <location>
        <begin position="120"/>
        <end position="251"/>
    </location>
</feature>
<feature type="region of interest" description="Interaction with PCNA" evidence="1">
    <location>
        <begin position="339"/>
        <end position="347"/>
    </location>
</feature>
<feature type="region of interest" description="Disordered" evidence="2">
    <location>
        <begin position="358"/>
        <end position="382"/>
    </location>
</feature>
<feature type="compositionally biased region" description="Basic residues" evidence="2">
    <location>
        <begin position="370"/>
        <end position="382"/>
    </location>
</feature>
<feature type="binding site" evidence="1">
    <location>
        <position position="34"/>
    </location>
    <ligand>
        <name>Mg(2+)</name>
        <dbReference type="ChEBI" id="CHEBI:18420"/>
        <label>1</label>
    </ligand>
</feature>
<feature type="binding site" evidence="1">
    <location>
        <position position="47"/>
    </location>
    <ligand>
        <name>DNA</name>
        <dbReference type="ChEBI" id="CHEBI:16991"/>
    </ligand>
</feature>
<feature type="binding site" evidence="1">
    <location>
        <position position="71"/>
    </location>
    <ligand>
        <name>DNA</name>
        <dbReference type="ChEBI" id="CHEBI:16991"/>
    </ligand>
</feature>
<feature type="binding site" evidence="1">
    <location>
        <position position="87"/>
    </location>
    <ligand>
        <name>Mg(2+)</name>
        <dbReference type="ChEBI" id="CHEBI:18420"/>
        <label>1</label>
    </ligand>
</feature>
<feature type="binding site" evidence="1">
    <location>
        <position position="156"/>
    </location>
    <ligand>
        <name>DNA</name>
        <dbReference type="ChEBI" id="CHEBI:16991"/>
    </ligand>
</feature>
<feature type="binding site" evidence="1">
    <location>
        <position position="156"/>
    </location>
    <ligand>
        <name>Mg(2+)</name>
        <dbReference type="ChEBI" id="CHEBI:18420"/>
        <label>1</label>
    </ligand>
</feature>
<feature type="binding site" evidence="1">
    <location>
        <position position="158"/>
    </location>
    <ligand>
        <name>Mg(2+)</name>
        <dbReference type="ChEBI" id="CHEBI:18420"/>
        <label>1</label>
    </ligand>
</feature>
<feature type="binding site" evidence="1">
    <location>
        <position position="177"/>
    </location>
    <ligand>
        <name>Mg(2+)</name>
        <dbReference type="ChEBI" id="CHEBI:18420"/>
        <label>2</label>
    </ligand>
</feature>
<feature type="binding site" evidence="1">
    <location>
        <position position="179"/>
    </location>
    <ligand>
        <name>Mg(2+)</name>
        <dbReference type="ChEBI" id="CHEBI:18420"/>
        <label>2</label>
    </ligand>
</feature>
<feature type="binding site" evidence="1">
    <location>
        <position position="229"/>
    </location>
    <ligand>
        <name>DNA</name>
        <dbReference type="ChEBI" id="CHEBI:16991"/>
    </ligand>
</feature>
<feature type="binding site" evidence="1">
    <location>
        <position position="231"/>
    </location>
    <ligand>
        <name>DNA</name>
        <dbReference type="ChEBI" id="CHEBI:16991"/>
    </ligand>
</feature>
<feature type="binding site" evidence="1">
    <location>
        <position position="231"/>
    </location>
    <ligand>
        <name>Mg(2+)</name>
        <dbReference type="ChEBI" id="CHEBI:18420"/>
        <label>2</label>
    </ligand>
</feature>
<name>FEN1_YEAS1</name>
<reference key="1">
    <citation type="submission" date="2005-03" db="EMBL/GenBank/DDBJ databases">
        <title>Annotation of the Saccharomyces cerevisiae RM11-1a genome.</title>
        <authorList>
            <consortium name="The Broad Institute Genome Sequencing Platform"/>
            <person name="Birren B.W."/>
            <person name="Lander E.S."/>
            <person name="Galagan J.E."/>
            <person name="Nusbaum C."/>
            <person name="Devon K."/>
            <person name="Cuomo C."/>
            <person name="Jaffe D.B."/>
            <person name="Butler J."/>
            <person name="Alvarez P."/>
            <person name="Gnerre S."/>
            <person name="Grabherr M."/>
            <person name="Kleber M."/>
            <person name="Mauceli E.W."/>
            <person name="Brockman W."/>
            <person name="MacCallum I.A."/>
            <person name="Rounsley S."/>
            <person name="Young S.K."/>
            <person name="LaButti K."/>
            <person name="Pushparaj V."/>
            <person name="DeCaprio D."/>
            <person name="Crawford M."/>
            <person name="Koehrsen M."/>
            <person name="Engels R."/>
            <person name="Montgomery P."/>
            <person name="Pearson M."/>
            <person name="Howarth C."/>
            <person name="Larson L."/>
            <person name="Luoma S."/>
            <person name="White J."/>
            <person name="O'Leary S."/>
            <person name="Kodira C.D."/>
            <person name="Zeng Q."/>
            <person name="Yandava C."/>
            <person name="Alvarado L."/>
            <person name="Pratt S."/>
            <person name="Kruglyak L."/>
        </authorList>
    </citation>
    <scope>NUCLEOTIDE SEQUENCE [LARGE SCALE GENOMIC DNA]</scope>
    <source>
        <strain>RM11-1a</strain>
    </source>
</reference>
<organism>
    <name type="scientific">Saccharomyces cerevisiae (strain RM11-1a)</name>
    <name type="common">Baker's yeast</name>
    <dbReference type="NCBI Taxonomy" id="285006"/>
    <lineage>
        <taxon>Eukaryota</taxon>
        <taxon>Fungi</taxon>
        <taxon>Dikarya</taxon>
        <taxon>Ascomycota</taxon>
        <taxon>Saccharomycotina</taxon>
        <taxon>Saccharomycetes</taxon>
        <taxon>Saccharomycetales</taxon>
        <taxon>Saccharomycetaceae</taxon>
        <taxon>Saccharomyces</taxon>
    </lineage>
</organism>